<feature type="initiator methionine" description="Removed" evidence="8">
    <location>
        <position position="1"/>
    </location>
</feature>
<feature type="chain" id="PRO_0000053309" description="Myoglobin">
    <location>
        <begin position="2"/>
        <end position="154"/>
    </location>
</feature>
<feature type="domain" description="Globin" evidence="7">
    <location>
        <begin position="2"/>
        <end position="148"/>
    </location>
</feature>
<feature type="binding site" evidence="5">
    <location>
        <position position="65"/>
    </location>
    <ligand>
        <name>nitrite</name>
        <dbReference type="ChEBI" id="CHEBI:16301"/>
    </ligand>
</feature>
<feature type="binding site" evidence="3 7">
    <location>
        <position position="65"/>
    </location>
    <ligand>
        <name>O2</name>
        <dbReference type="ChEBI" id="CHEBI:15379"/>
    </ligand>
</feature>
<feature type="binding site" description="proximal binding residue" evidence="1">
    <location>
        <position position="94"/>
    </location>
    <ligand>
        <name>heme b</name>
        <dbReference type="ChEBI" id="CHEBI:60344"/>
    </ligand>
    <ligandPart>
        <name>Fe</name>
        <dbReference type="ChEBI" id="CHEBI:18248"/>
    </ligandPart>
</feature>
<feature type="modified residue" description="Phosphoserine" evidence="6">
    <location>
        <position position="4"/>
    </location>
</feature>
<feature type="modified residue" description="Phosphothreonine" evidence="4">
    <location>
        <position position="68"/>
    </location>
</feature>
<feature type="sequence variant">
    <original>K</original>
    <variation>R</variation>
    <location>
        <position position="78"/>
    </location>
</feature>
<gene>
    <name type="primary">MB</name>
</gene>
<proteinExistence type="evidence at protein level"/>
<reference key="1">
    <citation type="journal article" date="1984" name="J. Protein Chem.">
        <title>The myoglobin of rodents: Lagostomus maximus (viscacha) and Spalax ehenbergi (mole rat).</title>
        <authorList>
            <person name="Gurnett A.M."/>
            <person name="O'Connell J.P."/>
            <person name="Harris D.E."/>
            <person name="Lehmann H."/>
            <person name="Joysey K.A."/>
            <person name="Nevo E."/>
        </authorList>
    </citation>
    <scope>PROTEIN SEQUENCE OF 2-154</scope>
</reference>
<protein>
    <recommendedName>
        <fullName>Myoglobin</fullName>
    </recommendedName>
    <alternativeName>
        <fullName evidence="1">Nitrite reductase MB</fullName>
        <ecNumber evidence="1">1.7.-.-</ecNumber>
    </alternativeName>
    <alternativeName>
        <fullName evidence="1">Pseudoperoxidase MB</fullName>
        <ecNumber evidence="1">1.11.1.-</ecNumber>
    </alternativeName>
</protein>
<dbReference type="EC" id="1.7.-.-" evidence="1"/>
<dbReference type="EC" id="1.11.1.-" evidence="1"/>
<dbReference type="PIR" id="A02487">
    <property type="entry name" value="MYVJ"/>
</dbReference>
<dbReference type="SMR" id="P04250"/>
<dbReference type="GO" id="GO:0070062">
    <property type="term" value="C:extracellular exosome"/>
    <property type="evidence" value="ECO:0007669"/>
    <property type="project" value="TreeGrafter"/>
</dbReference>
<dbReference type="GO" id="GO:0016528">
    <property type="term" value="C:sarcoplasm"/>
    <property type="evidence" value="ECO:0000250"/>
    <property type="project" value="UniProtKB"/>
</dbReference>
<dbReference type="GO" id="GO:0020037">
    <property type="term" value="F:heme binding"/>
    <property type="evidence" value="ECO:0007669"/>
    <property type="project" value="InterPro"/>
</dbReference>
<dbReference type="GO" id="GO:0046872">
    <property type="term" value="F:metal ion binding"/>
    <property type="evidence" value="ECO:0007669"/>
    <property type="project" value="UniProtKB-KW"/>
</dbReference>
<dbReference type="GO" id="GO:0098809">
    <property type="term" value="F:nitrite reductase activity"/>
    <property type="evidence" value="ECO:0000250"/>
    <property type="project" value="UniProtKB"/>
</dbReference>
<dbReference type="GO" id="GO:0019825">
    <property type="term" value="F:oxygen binding"/>
    <property type="evidence" value="ECO:0007669"/>
    <property type="project" value="InterPro"/>
</dbReference>
<dbReference type="GO" id="GO:0005344">
    <property type="term" value="F:oxygen carrier activity"/>
    <property type="evidence" value="ECO:0000250"/>
    <property type="project" value="UniProtKB"/>
</dbReference>
<dbReference type="GO" id="GO:0004601">
    <property type="term" value="F:peroxidase activity"/>
    <property type="evidence" value="ECO:0000250"/>
    <property type="project" value="UniProtKB"/>
</dbReference>
<dbReference type="GO" id="GO:0019430">
    <property type="term" value="P:removal of superoxide radicals"/>
    <property type="evidence" value="ECO:0000250"/>
    <property type="project" value="UniProtKB"/>
</dbReference>
<dbReference type="CDD" id="cd08926">
    <property type="entry name" value="Mb"/>
    <property type="match status" value="1"/>
</dbReference>
<dbReference type="Gene3D" id="6.10.140.2100">
    <property type="match status" value="1"/>
</dbReference>
<dbReference type="Gene3D" id="6.10.140.2110">
    <property type="match status" value="1"/>
</dbReference>
<dbReference type="InterPro" id="IPR000971">
    <property type="entry name" value="Globin"/>
</dbReference>
<dbReference type="InterPro" id="IPR009050">
    <property type="entry name" value="Globin-like_sf"/>
</dbReference>
<dbReference type="InterPro" id="IPR002335">
    <property type="entry name" value="Myoglobin"/>
</dbReference>
<dbReference type="PANTHER" id="PTHR47132">
    <property type="entry name" value="MYOGLOBIN"/>
    <property type="match status" value="1"/>
</dbReference>
<dbReference type="PANTHER" id="PTHR47132:SF1">
    <property type="entry name" value="MYOGLOBIN"/>
    <property type="match status" value="1"/>
</dbReference>
<dbReference type="Pfam" id="PF00042">
    <property type="entry name" value="Globin"/>
    <property type="match status" value="1"/>
</dbReference>
<dbReference type="PRINTS" id="PR00613">
    <property type="entry name" value="MYOGLOBIN"/>
</dbReference>
<dbReference type="SUPFAM" id="SSF46458">
    <property type="entry name" value="Globin-like"/>
    <property type="match status" value="1"/>
</dbReference>
<dbReference type="PROSITE" id="PS01033">
    <property type="entry name" value="GLOBIN"/>
    <property type="match status" value="1"/>
</dbReference>
<sequence length="154" mass="17011">MGLSDGEWQLVLNVWGKVEADLGGHGQEVLIRLFKGHPETLEKFDKFKHLKAEDEMRASEDLKKHGTTVLTALGGILKKRGQHAAELAPLAQSHATKHKIPVKYLEFISEAIIQVLQSKHPGDFGADAQAAMSKALELFRNDIAAKYKELGFQG</sequence>
<organism>
    <name type="scientific">Lagostomus maximus</name>
    <name type="common">Plains viscacha</name>
    <dbReference type="NCBI Taxonomy" id="10154"/>
    <lineage>
        <taxon>Eukaryota</taxon>
        <taxon>Metazoa</taxon>
        <taxon>Chordata</taxon>
        <taxon>Craniata</taxon>
        <taxon>Vertebrata</taxon>
        <taxon>Euteleostomi</taxon>
        <taxon>Mammalia</taxon>
        <taxon>Eutheria</taxon>
        <taxon>Euarchontoglires</taxon>
        <taxon>Glires</taxon>
        <taxon>Rodentia</taxon>
        <taxon>Hystricomorpha</taxon>
        <taxon>Chinchillidae</taxon>
        <taxon>Lagostomus</taxon>
    </lineage>
</organism>
<name>MYG_LAGMA</name>
<comment type="function">
    <text evidence="1">Monomeric heme protein which primary function is to store oxygen and facilitate its diffusion within muscle tissues. Reversibly binds oxygen through a pentacoordinated heme iron and enables its timely and efficient release as needed during periods of heightened demand. Depending on the oxidative conditions of tissues and cells, and in addition to its ability to bind oxygen, it also has a nitrite reductase activity whereby it regulates the production of bioactive nitric oxide. Under stress conditions, like hypoxia and anoxia, it also protects cells against reactive oxygen species thanks to its pseudoperoxidase activity.</text>
</comment>
<comment type="catalytic activity">
    <reaction evidence="1">
        <text>Fe(III)-heme b-[protein] + nitric oxide + H2O = Fe(II)-heme b-[protein] + nitrite + 2 H(+)</text>
        <dbReference type="Rhea" id="RHEA:77711"/>
        <dbReference type="Rhea" id="RHEA-COMP:18975"/>
        <dbReference type="Rhea" id="RHEA-COMP:18976"/>
        <dbReference type="ChEBI" id="CHEBI:15377"/>
        <dbReference type="ChEBI" id="CHEBI:15378"/>
        <dbReference type="ChEBI" id="CHEBI:16301"/>
        <dbReference type="ChEBI" id="CHEBI:16480"/>
        <dbReference type="ChEBI" id="CHEBI:55376"/>
        <dbReference type="ChEBI" id="CHEBI:60344"/>
    </reaction>
    <physiologicalReaction direction="right-to-left" evidence="1">
        <dbReference type="Rhea" id="RHEA:77713"/>
    </physiologicalReaction>
</comment>
<comment type="catalytic activity">
    <reaction evidence="1">
        <text>H2O2 + AH2 = A + 2 H2O</text>
        <dbReference type="Rhea" id="RHEA:30275"/>
        <dbReference type="ChEBI" id="CHEBI:13193"/>
        <dbReference type="ChEBI" id="CHEBI:15377"/>
        <dbReference type="ChEBI" id="CHEBI:16240"/>
        <dbReference type="ChEBI" id="CHEBI:17499"/>
    </reaction>
</comment>
<comment type="subunit">
    <text evidence="2">Monomeric.</text>
</comment>
<comment type="subcellular location">
    <subcellularLocation>
        <location evidence="1">Cytoplasm</location>
        <location evidence="1">Sarcoplasm</location>
    </subcellularLocation>
</comment>
<comment type="similarity">
    <text evidence="7">Belongs to the globin family.</text>
</comment>
<accession>P04250</accession>
<evidence type="ECO:0000250" key="1">
    <source>
        <dbReference type="UniProtKB" id="P02144"/>
    </source>
</evidence>
<evidence type="ECO:0000250" key="2">
    <source>
        <dbReference type="UniProtKB" id="P02185"/>
    </source>
</evidence>
<evidence type="ECO:0000250" key="3">
    <source>
        <dbReference type="UniProtKB" id="P02189"/>
    </source>
</evidence>
<evidence type="ECO:0000250" key="4">
    <source>
        <dbReference type="UniProtKB" id="P04247"/>
    </source>
</evidence>
<evidence type="ECO:0000250" key="5">
    <source>
        <dbReference type="UniProtKB" id="P68082"/>
    </source>
</evidence>
<evidence type="ECO:0000250" key="6">
    <source>
        <dbReference type="UniProtKB" id="Q9QZ76"/>
    </source>
</evidence>
<evidence type="ECO:0000255" key="7">
    <source>
        <dbReference type="PROSITE-ProRule" id="PRU00238"/>
    </source>
</evidence>
<evidence type="ECO:0000269" key="8">
    <source ref="1"/>
</evidence>
<keyword id="KW-0963">Cytoplasm</keyword>
<keyword id="KW-0903">Direct protein sequencing</keyword>
<keyword id="KW-0349">Heme</keyword>
<keyword id="KW-0408">Iron</keyword>
<keyword id="KW-0479">Metal-binding</keyword>
<keyword id="KW-0514">Muscle protein</keyword>
<keyword id="KW-0560">Oxidoreductase</keyword>
<keyword id="KW-0561">Oxygen transport</keyword>
<keyword id="KW-0597">Phosphoprotein</keyword>
<keyword id="KW-0813">Transport</keyword>